<comment type="function">
    <text evidence="4">Transcriptional regulator that is critical for the regulation of pain perception and processing of noxious stimuli.</text>
</comment>
<comment type="interaction">
    <interactant intactId="EBI-25850811">
        <id>Q9C0A1</id>
    </interactant>
    <interactant intactId="EBI-15639515">
        <id>O15354</id>
        <label>GPR37</label>
    </interactant>
    <organismsDiffer>false</organismsDiffer>
    <experiments>3</experiments>
</comment>
<comment type="interaction">
    <interactant intactId="EBI-25850811">
        <id>Q9C0A1</id>
    </interactant>
    <interactant intactId="EBI-25860013">
        <id>P28799-2</id>
        <label>GRN</label>
    </interactant>
    <organismsDiffer>false</organismsDiffer>
    <experiments>3</experiments>
</comment>
<comment type="interaction">
    <interactant intactId="EBI-25850811">
        <id>Q9C0A1</id>
    </interactant>
    <interactant intactId="EBI-366182">
        <id>P10636</id>
        <label>MAPT</label>
    </interactant>
    <organismsDiffer>false</organismsDiffer>
    <experiments>3</experiments>
</comment>
<comment type="interaction">
    <interactant intactId="EBI-25850811">
        <id>Q9C0A1</id>
    </interactant>
    <interactant intactId="EBI-7796455">
        <id>P10636-6</id>
        <label>MAPT</label>
    </interactant>
    <organismsDiffer>false</organismsDiffer>
    <experiments>3</experiments>
</comment>
<comment type="interaction">
    <interactant intactId="EBI-25850811">
        <id>Q9C0A1</id>
    </interactant>
    <interactant intactId="EBI-50433196">
        <id>A0A6Q8PF08</id>
        <label>PMP22</label>
    </interactant>
    <organismsDiffer>false</organismsDiffer>
    <experiments>3</experiments>
</comment>
<comment type="subcellular location">
    <subcellularLocation>
        <location evidence="4">Nucleus</location>
    </subcellularLocation>
</comment>
<comment type="alternative products">
    <event type="alternative splicing"/>
    <isoform>
        <id>Q9C0A1-1</id>
        <name>1</name>
        <sequence type="displayed"/>
    </isoform>
    <isoform>
        <id>Q9C0A1-2</id>
        <name>2</name>
        <sequence type="described" ref="VSP_039496 VSP_039497"/>
    </isoform>
</comment>
<comment type="disease" evidence="4">
    <disease id="DI-05171">
        <name>Marsili syndrome</name>
        <acronym>MARSIS</acronym>
        <description>An autosomal dominant disorder characterized by congenital pain insensitivity. Painless cutaneous thermal burns and bone fractures are present in affected individuals. Corneal reflex is absent, sweating is decreased or absent. Patients have normal cognitive abilities, and display no evidence of distal weakness.</description>
        <dbReference type="MIM" id="147430"/>
    </disease>
    <text>The disease may be caused by variants affecting the gene represented in this entry.</text>
</comment>
<comment type="sequence caution" evidence="6">
    <conflict type="erroneous initiation">
        <sequence resource="EMBL-CDS" id="BAA83008"/>
    </conflict>
    <text>Extended N-terminus.</text>
</comment>
<protein>
    <recommendedName>
        <fullName>Zinc finger homeobox protein 2</fullName>
    </recommendedName>
    <alternativeName>
        <fullName>Zinc finger homeodomain protein 2</fullName>
        <shortName>ZFH-2</shortName>
    </alternativeName>
</protein>
<accession>Q9C0A1</accession>
<accession>Q9UPU6</accession>
<keyword id="KW-0025">Alternative splicing</keyword>
<keyword id="KW-0225">Disease variant</keyword>
<keyword id="KW-0238">DNA-binding</keyword>
<keyword id="KW-0371">Homeobox</keyword>
<keyword id="KW-0479">Metal-binding</keyword>
<keyword id="KW-0539">Nucleus</keyword>
<keyword id="KW-1267">Proteomics identification</keyword>
<keyword id="KW-1185">Reference proteome</keyword>
<keyword id="KW-0677">Repeat</keyword>
<keyword id="KW-0804">Transcription</keyword>
<keyword id="KW-0805">Transcription regulation</keyword>
<keyword id="KW-0862">Zinc</keyword>
<keyword id="KW-0863">Zinc-finger</keyword>
<gene>
    <name type="primary">ZFHX2</name>
    <name type="synonym">KIAA1056</name>
    <name type="synonym">KIAA1762</name>
    <name type="synonym">ZNF409</name>
</gene>
<name>ZFHX2_HUMAN</name>
<proteinExistence type="evidence at protein level"/>
<evidence type="ECO:0000255" key="1">
    <source>
        <dbReference type="PROSITE-ProRule" id="PRU00042"/>
    </source>
</evidence>
<evidence type="ECO:0000255" key="2">
    <source>
        <dbReference type="PROSITE-ProRule" id="PRU00108"/>
    </source>
</evidence>
<evidence type="ECO:0000256" key="3">
    <source>
        <dbReference type="SAM" id="MobiDB-lite"/>
    </source>
</evidence>
<evidence type="ECO:0000269" key="4">
    <source>
    </source>
</evidence>
<evidence type="ECO:0000303" key="5">
    <source>
    </source>
</evidence>
<evidence type="ECO:0000305" key="6"/>
<organism>
    <name type="scientific">Homo sapiens</name>
    <name type="common">Human</name>
    <dbReference type="NCBI Taxonomy" id="9606"/>
    <lineage>
        <taxon>Eukaryota</taxon>
        <taxon>Metazoa</taxon>
        <taxon>Chordata</taxon>
        <taxon>Craniata</taxon>
        <taxon>Vertebrata</taxon>
        <taxon>Euteleostomi</taxon>
        <taxon>Mammalia</taxon>
        <taxon>Eutheria</taxon>
        <taxon>Euarchontoglires</taxon>
        <taxon>Primates</taxon>
        <taxon>Haplorrhini</taxon>
        <taxon>Catarrhini</taxon>
        <taxon>Hominidae</taxon>
        <taxon>Homo</taxon>
    </lineage>
</organism>
<reference key="1">
    <citation type="journal article" date="2000" name="DNA Res.">
        <title>Prediction of the coding sequences of unidentified human genes. XIX. The complete sequences of 100 new cDNA clones from brain which code for large proteins in vitro.</title>
        <authorList>
            <person name="Nagase T."/>
            <person name="Kikuno R."/>
            <person name="Hattori A."/>
            <person name="Kondo Y."/>
            <person name="Okumura K."/>
            <person name="Ohara O."/>
        </authorList>
    </citation>
    <scope>NUCLEOTIDE SEQUENCE [LARGE SCALE MRNA] (ISOFORM 2)</scope>
    <scope>NUCLEOTIDE SEQUENCE [LARGE SCALE MRNA] OF 1113-2572 (ISOFORM 1)</scope>
    <source>
        <tissue>Brain</tissue>
    </source>
</reference>
<reference key="2">
    <citation type="journal article" date="2003" name="Nature">
        <title>The DNA sequence and analysis of human chromosome 14.</title>
        <authorList>
            <person name="Heilig R."/>
            <person name="Eckenberg R."/>
            <person name="Petit J.-L."/>
            <person name="Fonknechten N."/>
            <person name="Da Silva C."/>
            <person name="Cattolico L."/>
            <person name="Levy M."/>
            <person name="Barbe V."/>
            <person name="De Berardinis V."/>
            <person name="Ureta-Vidal A."/>
            <person name="Pelletier E."/>
            <person name="Vico V."/>
            <person name="Anthouard V."/>
            <person name="Rowen L."/>
            <person name="Madan A."/>
            <person name="Qin S."/>
            <person name="Sun H."/>
            <person name="Du H."/>
            <person name="Pepin K."/>
            <person name="Artiguenave F."/>
            <person name="Robert C."/>
            <person name="Cruaud C."/>
            <person name="Bruels T."/>
            <person name="Jaillon O."/>
            <person name="Friedlander L."/>
            <person name="Samson G."/>
            <person name="Brottier P."/>
            <person name="Cure S."/>
            <person name="Segurens B."/>
            <person name="Aniere F."/>
            <person name="Samain S."/>
            <person name="Crespeau H."/>
            <person name="Abbasi N."/>
            <person name="Aiach N."/>
            <person name="Boscus D."/>
            <person name="Dickhoff R."/>
            <person name="Dors M."/>
            <person name="Dubois I."/>
            <person name="Friedman C."/>
            <person name="Gouyvenoux M."/>
            <person name="James R."/>
            <person name="Madan A."/>
            <person name="Mairey-Estrada B."/>
            <person name="Mangenot S."/>
            <person name="Martins N."/>
            <person name="Menard M."/>
            <person name="Oztas S."/>
            <person name="Ratcliffe A."/>
            <person name="Shaffer T."/>
            <person name="Trask B."/>
            <person name="Vacherie B."/>
            <person name="Bellemere C."/>
            <person name="Belser C."/>
            <person name="Besnard-Gonnet M."/>
            <person name="Bartol-Mavel D."/>
            <person name="Boutard M."/>
            <person name="Briez-Silla S."/>
            <person name="Combette S."/>
            <person name="Dufosse-Laurent V."/>
            <person name="Ferron C."/>
            <person name="Lechaplais C."/>
            <person name="Louesse C."/>
            <person name="Muselet D."/>
            <person name="Magdelenat G."/>
            <person name="Pateau E."/>
            <person name="Petit E."/>
            <person name="Sirvain-Trukniewicz P."/>
            <person name="Trybou A."/>
            <person name="Vega-Czarny N."/>
            <person name="Bataille E."/>
            <person name="Bluet E."/>
            <person name="Bordelais I."/>
            <person name="Dubois M."/>
            <person name="Dumont C."/>
            <person name="Guerin T."/>
            <person name="Haffray S."/>
            <person name="Hammadi R."/>
            <person name="Muanga J."/>
            <person name="Pellouin V."/>
            <person name="Robert D."/>
            <person name="Wunderle E."/>
            <person name="Gauguet G."/>
            <person name="Roy A."/>
            <person name="Sainte-Marthe L."/>
            <person name="Verdier J."/>
            <person name="Verdier-Discala C."/>
            <person name="Hillier L.W."/>
            <person name="Fulton L."/>
            <person name="McPherson J."/>
            <person name="Matsuda F."/>
            <person name="Wilson R."/>
            <person name="Scarpelli C."/>
            <person name="Gyapay G."/>
            <person name="Wincker P."/>
            <person name="Saurin W."/>
            <person name="Quetier F."/>
            <person name="Waterston R."/>
            <person name="Hood L."/>
            <person name="Weissenbach J."/>
        </authorList>
    </citation>
    <scope>NUCLEOTIDE SEQUENCE [LARGE SCALE GENOMIC DNA]</scope>
</reference>
<reference key="3">
    <citation type="journal article" date="2018" name="Brain">
        <title>A novel human pain insensitivity disorder caused by a point mutation in ZFHX2.</title>
        <authorList>
            <person name="Habib A.M."/>
            <person name="Matsuyama A."/>
            <person name="Okorokov A.L."/>
            <person name="Santana-Varela S."/>
            <person name="Bras J.T."/>
            <person name="Aloisi A.M."/>
            <person name="Emery E.C."/>
            <person name="Bogdanov Y.D."/>
            <person name="Follenfant M."/>
            <person name="Gossage S.J."/>
            <person name="Gras M."/>
            <person name="Humphrey J."/>
            <person name="Kolesnikov A."/>
            <person name="Le Cann K."/>
            <person name="Li S."/>
            <person name="Minett M.S."/>
            <person name="Pereira V."/>
            <person name="Ponsolles C."/>
            <person name="Sikandar S."/>
            <person name="Torres J.M."/>
            <person name="Yamaoka K."/>
            <person name="Zhao J."/>
            <person name="Komine Y."/>
            <person name="Yamamori T."/>
            <person name="Maniatis N."/>
            <person name="Panov K.I."/>
            <person name="Houlden H."/>
            <person name="Ramirez J.D."/>
            <person name="Bennett D.L.H."/>
            <person name="Marsili L."/>
            <person name="Bachiocco V."/>
            <person name="Wood J.N."/>
            <person name="Cox J.J."/>
        </authorList>
    </citation>
    <scope>FUNCTION</scope>
    <scope>SUBCELLULAR LOCATION</scope>
    <scope>INVOLVEMENT IN MARSIS</scope>
    <scope>VARIANT MARSIS LYS-1913</scope>
</reference>
<sequence length="2572" mass="274176">MATLNSASTTGTTPSPGHNAPSLPSDTFSSSTPSDPVTKDPPAASSTSENMRSSEPGGQLLESGCGLVPPKEIGEPQEGPDCGHFPPNDPGVEKDKEQEEEEEGLPPMDLSNHLFFTAGGEAYLVAKLSLPGGSELLLPKGFPWGEAGIKEEPSLPFLAYPPPSHLTALHIQHGFDPIQGFSSSDQILSHDTSAPSPAACEERHGAFWSYQLAPNPPGDPKDGPMGNSGGNHVAVFWLCLLCRLGFSKPQAFMDHTQSHGVKLTPAQYQGLSGSPAVLQEGDEGCKALISFLEPKLPARPSSDIPLDNSSTVNMEANVAQTEDGPPEAEVQALILLDEEVMALSPPSPPTATWDPSPTQAKESPVAAGEAGPDWFPEGQEEDGGLCPPLNQSSPTSKEGGTLPAPVGSPEDPSDPPQPYRLADDYTPAPAAFQGLSLSSHMSLLHSRNSCKTLKCPKCNWHYKYQQTLDVHMREKHPESNSHCSYCSAGGAHPRLARGESYNCGYKPYRCDVCNYSTTTKGNLSIHMQSDKHLANLQGFQAGPGGQGSPPEASLPPSAGDKEPKTKSSWQCKVCSYETNISRNLRIHMTSEKHMQNVLMLHQGLPLGLPPGLMGPGPPPPPGATPTSPPELFQYFGPQALGQPQTPLAGPGLRPDKPLEAQLLLNGFHHVGAPARKFPTSAPGSLSPDAHLPPSQLLGSSSDSLPTSPPPDDSLSLKVFRCLVCQAFSTDSLELLLYHCSIGRSLPEAEWKEVAGDTHRCKLCCYGTQLKANFQLHLKTDKHAQKYQLAAHLREGGGAMGTPSPASLGDGAPYGSVSPLHLRCNICDFESNSKEKMQLHARGAAHEENSQIYKFLLDMEGAEAGAELGLYHCLLCAWETPSRLAVLQHLRTPAHRDAQAQRRLQLLQNGPTTEEGLAALQSILSFSHGQLRTPGKAPVTPLAEPPTPEKDAQNKTEQLASEETENKTGPSRDSANQTTVYCCPYCSFLSPESSQVRAHTLSQHAVQPKYRCPLCQEQLVGRPALHFHLSHLHNVVPECVEKLLLVATTVEMTFTTKVLSAPTLSPLDNGQEPPTHGPEPTPSRDQAAEGPNLTPEASPDPLPEPPLASVEVPDKPSGSPGQPPSPAPSPVPEPDAQAEDVAPPPTMAEEEEGTTGELRSAEPAPADSRHPLTYRKTTNFALDKFLDPARPYKCTVCKESFTQKNILLVHYNSVSHLHKMKKAAIDPSAPARGEAGAPPTTTAATDKPFKCTVCRVSYNQSSTLEIHMRSVLHQTRSRGTKTDSKIEGPERSQEEPKEGETEGEVGTEKKGPDTSGFISGLPFLSPPPPPLDLHRFPAPLFTPPVLPPFPLVPESLLKLQQQQLLLPFYLHDLKVGPKLTLAGPAPVLSLPAATPPPPPQPPKAELAEREWERPPMAKEGNEAGPSSPPDPLPNEAARTAAKALLENFGFELVIQYNEGKQAVPPPPTPPPPEALGGGDKLACGACGKLFSNMLILKTHEEHVHRRFLPFEALSRYAAQFRKSYDSLYPPLAEPPKPPDGSLDSPVPHLGPPFLVPEPEAGGTRAPEERSRAGGHWPIEEEESSRGNLPPLVPAGRRFSRTKFTEFQTQALQSFFETSAYPKDGEVERLASLLGLASRVVVVWFQNARQKARKNACEGGSMPTGGGTGGASGCRRCHATFSCVFELVRHLKKCYDDQTLEEEEEEAERGEEEEEVEEEEVEEEQGLEPPAGPEGPLPEPPDGEELSQAEATKAGGKEPEEKATPSPSPAHTCDQCAISFSSQDLLTSHRRLHFLPSLQPSAPPQLLDLPLLVFGERNPLVAATSPMPGPPLKRKHEDGSLSPTGSEAGGGGEGEPPRDKRLRTTILPEQLEILYRWYMQDSNPTRKMLDCISEEVGLKKRVVQVWFQNTRARERKGQFRSTPGGVPSPAVKPPATATPASLPKFNLLLGKVDDGTGREAPKREAPAFPYPTATLASGPQPFLPPGKEATTPTPEPPLPLLPPPPPSEEEGPEEPPKASPESEACSLSAGDLSDSSASSLAEPESPGAGGTSGGPGGGTGVPDGMGQRRYRTQMSSLQLKIMKACYEAYRTPTMQECEVLGEEIGLPKRVIQVWFQNARAKEKKAKLQGTAAGSTGGSSEGLLAAQRTDCPYCDVKYDFYVSCRGHLFSRQHLAKLKEAVRAQLKSESKCYDLAPAPEAPPALKAPPATTPASMPLGAAPTLPRLAPVLLSGPALAQPPLGNLAPFNSGPAASSGLLGLATSVLPTTTVVQTAGPGRPLPQRPMPDQTNTSTAGTTDPVPGPPTEPLGDKVSSERKPVAGPTSSSNDALKNLKALKTTVPALLGGQFLPFPLPPAGGTAPPAVFGPQLQGAYFQQLYGMKKGLFPMNPMIPQTLIGLLPNALLQPPPQPPEPTATAPPKPPELPAPGEGEAGEVDELLTGSTGISTVDVTHRYLCRQCKMAFDGEAPATAHQRSFCFFGRGSGGSMPPPLRVPICTYHCLACEVLLSGREALASHLRSSAHRRKAAPPQGGPPISITNAATAASAAVAFAKEEARLPHTDSNPKTTTTSTLLAL</sequence>
<dbReference type="EMBL" id="AB028979">
    <property type="protein sequence ID" value="BAA83008.2"/>
    <property type="status" value="ALT_INIT"/>
    <property type="molecule type" value="mRNA"/>
</dbReference>
<dbReference type="EMBL" id="AB051549">
    <property type="protein sequence ID" value="BAB21853.1"/>
    <property type="molecule type" value="mRNA"/>
</dbReference>
<dbReference type="EMBL" id="AL132855">
    <property type="status" value="NOT_ANNOTATED_CDS"/>
    <property type="molecule type" value="Genomic_DNA"/>
</dbReference>
<dbReference type="EMBL" id="AL135999">
    <property type="status" value="NOT_ANNOTATED_CDS"/>
    <property type="molecule type" value="Genomic_DNA"/>
</dbReference>
<dbReference type="CCDS" id="CCDS55907.1">
    <molecule id="Q9C0A1-1"/>
</dbReference>
<dbReference type="RefSeq" id="NP_207646.2">
    <molecule id="Q9C0A1-1"/>
    <property type="nucleotide sequence ID" value="NM_033400.3"/>
</dbReference>
<dbReference type="RefSeq" id="XP_011535547.1">
    <molecule id="Q9C0A1-1"/>
    <property type="nucleotide sequence ID" value="XM_011537245.4"/>
</dbReference>
<dbReference type="RefSeq" id="XP_011535548.1">
    <property type="nucleotide sequence ID" value="XM_011537246.2"/>
</dbReference>
<dbReference type="RefSeq" id="XP_011535549.1">
    <property type="nucleotide sequence ID" value="XM_011537247.2"/>
</dbReference>
<dbReference type="RefSeq" id="XP_016877203.1">
    <property type="nucleotide sequence ID" value="XM_017021714.1"/>
</dbReference>
<dbReference type="BioGRID" id="124533">
    <property type="interactions" value="9"/>
</dbReference>
<dbReference type="FunCoup" id="Q9C0A1">
    <property type="interactions" value="615"/>
</dbReference>
<dbReference type="IntAct" id="Q9C0A1">
    <property type="interactions" value="5"/>
</dbReference>
<dbReference type="STRING" id="9606.ENSP00000413418"/>
<dbReference type="GlyGen" id="Q9C0A1">
    <property type="glycosylation" value="14 sites, 1 O-linked glycan (1 site)"/>
</dbReference>
<dbReference type="iPTMnet" id="Q9C0A1"/>
<dbReference type="PhosphoSitePlus" id="Q9C0A1"/>
<dbReference type="BioMuta" id="ZFHX2"/>
<dbReference type="DMDM" id="300669698"/>
<dbReference type="jPOST" id="Q9C0A1"/>
<dbReference type="MassIVE" id="Q9C0A1"/>
<dbReference type="PaxDb" id="9606-ENSP00000413418"/>
<dbReference type="PeptideAtlas" id="Q9C0A1"/>
<dbReference type="ProteomicsDB" id="79976">
    <molecule id="Q9C0A1-1"/>
</dbReference>
<dbReference type="ProteomicsDB" id="79977">
    <molecule id="Q9C0A1-2"/>
</dbReference>
<dbReference type="Antibodypedia" id="51729">
    <property type="antibodies" value="37 antibodies from 12 providers"/>
</dbReference>
<dbReference type="DNASU" id="85446"/>
<dbReference type="Ensembl" id="ENST00000419474.5">
    <molecule id="Q9C0A1-1"/>
    <property type="protein sequence ID" value="ENSP00000413418.2"/>
    <property type="gene ID" value="ENSG00000136367.15"/>
</dbReference>
<dbReference type="GeneID" id="85446"/>
<dbReference type="KEGG" id="hsa:85446"/>
<dbReference type="MANE-Select" id="ENST00000419474.5">
    <property type="protein sequence ID" value="ENSP00000413418.2"/>
    <property type="RefSeq nucleotide sequence ID" value="NM_033400.3"/>
    <property type="RefSeq protein sequence ID" value="NP_207646.2"/>
</dbReference>
<dbReference type="UCSC" id="uc010tno.2">
    <molecule id="Q9C0A1-1"/>
    <property type="organism name" value="human"/>
</dbReference>
<dbReference type="AGR" id="HGNC:20152"/>
<dbReference type="CTD" id="85446"/>
<dbReference type="DisGeNET" id="85446"/>
<dbReference type="GeneCards" id="ZFHX2"/>
<dbReference type="HGNC" id="HGNC:20152">
    <property type="gene designation" value="ZFHX2"/>
</dbReference>
<dbReference type="HPA" id="ENSG00000136367">
    <property type="expression patterns" value="Tissue enhanced (testis)"/>
</dbReference>
<dbReference type="MalaCards" id="ZFHX2"/>
<dbReference type="MIM" id="147430">
    <property type="type" value="phenotype"/>
</dbReference>
<dbReference type="MIM" id="617828">
    <property type="type" value="gene"/>
</dbReference>
<dbReference type="neXtProt" id="NX_Q9C0A1"/>
<dbReference type="OpenTargets" id="ENSG00000136367"/>
<dbReference type="Orphanet" id="653728">
    <property type="disease" value="Congenital insensitivity to pain syndrome, Marsili type"/>
</dbReference>
<dbReference type="VEuPathDB" id="HostDB:ENSG00000136367"/>
<dbReference type="eggNOG" id="KOG1146">
    <property type="taxonomic scope" value="Eukaryota"/>
</dbReference>
<dbReference type="GeneTree" id="ENSGT00940000160537"/>
<dbReference type="HOGENOM" id="CLU_001401_1_0_1"/>
<dbReference type="InParanoid" id="Q9C0A1"/>
<dbReference type="OMA" id="PDTHLPQ"/>
<dbReference type="OrthoDB" id="6417226at2759"/>
<dbReference type="PAN-GO" id="Q9C0A1">
    <property type="GO annotations" value="6 GO annotations based on evolutionary models"/>
</dbReference>
<dbReference type="PhylomeDB" id="Q9C0A1"/>
<dbReference type="TreeFam" id="TF323288"/>
<dbReference type="PathwayCommons" id="Q9C0A1"/>
<dbReference type="SignaLink" id="Q9C0A1"/>
<dbReference type="BioGRID-ORCS" id="85446">
    <property type="hits" value="16 hits in 1150 CRISPR screens"/>
</dbReference>
<dbReference type="ChiTaRS" id="ZFHX2">
    <property type="organism name" value="human"/>
</dbReference>
<dbReference type="GenomeRNAi" id="85446"/>
<dbReference type="Pharos" id="Q9C0A1">
    <property type="development level" value="Tdark"/>
</dbReference>
<dbReference type="PRO" id="PR:Q9C0A1"/>
<dbReference type="Proteomes" id="UP000005640">
    <property type="component" value="Chromosome 14"/>
</dbReference>
<dbReference type="RNAct" id="Q9C0A1">
    <property type="molecule type" value="protein"/>
</dbReference>
<dbReference type="Bgee" id="ENSG00000136367">
    <property type="expression patterns" value="Expressed in buccal mucosa cell and 128 other cell types or tissues"/>
</dbReference>
<dbReference type="ExpressionAtlas" id="Q9C0A1">
    <property type="expression patterns" value="baseline and differential"/>
</dbReference>
<dbReference type="GO" id="GO:0000785">
    <property type="term" value="C:chromatin"/>
    <property type="evidence" value="ECO:0000247"/>
    <property type="project" value="NTNU_SB"/>
</dbReference>
<dbReference type="GO" id="GO:0005634">
    <property type="term" value="C:nucleus"/>
    <property type="evidence" value="ECO:0000314"/>
    <property type="project" value="UniProtKB"/>
</dbReference>
<dbReference type="GO" id="GO:0000981">
    <property type="term" value="F:DNA-binding transcription factor activity, RNA polymerase II-specific"/>
    <property type="evidence" value="ECO:0000247"/>
    <property type="project" value="NTNU_SB"/>
</dbReference>
<dbReference type="GO" id="GO:0000978">
    <property type="term" value="F:RNA polymerase II cis-regulatory region sequence-specific DNA binding"/>
    <property type="evidence" value="ECO:0000318"/>
    <property type="project" value="GO_Central"/>
</dbReference>
<dbReference type="GO" id="GO:0008270">
    <property type="term" value="F:zinc ion binding"/>
    <property type="evidence" value="ECO:0007669"/>
    <property type="project" value="UniProtKB-KW"/>
</dbReference>
<dbReference type="GO" id="GO:0030534">
    <property type="term" value="P:adult behavior"/>
    <property type="evidence" value="ECO:0007669"/>
    <property type="project" value="Ensembl"/>
</dbReference>
<dbReference type="GO" id="GO:0045664">
    <property type="term" value="P:regulation of neuron differentiation"/>
    <property type="evidence" value="ECO:0000318"/>
    <property type="project" value="GO_Central"/>
</dbReference>
<dbReference type="GO" id="GO:0051930">
    <property type="term" value="P:regulation of sensory perception of pain"/>
    <property type="evidence" value="ECO:0000315"/>
    <property type="project" value="UniProtKB"/>
</dbReference>
<dbReference type="GO" id="GO:0006357">
    <property type="term" value="P:regulation of transcription by RNA polymerase II"/>
    <property type="evidence" value="ECO:0000318"/>
    <property type="project" value="GO_Central"/>
</dbReference>
<dbReference type="CDD" id="cd00086">
    <property type="entry name" value="homeodomain"/>
    <property type="match status" value="3"/>
</dbReference>
<dbReference type="FunFam" id="3.30.160.60:FF:000317">
    <property type="entry name" value="zinc finger homeobox protein 3"/>
    <property type="match status" value="1"/>
</dbReference>
<dbReference type="FunFam" id="3.30.160.60:FF:000081">
    <property type="entry name" value="Zinc finger homeobox protein 4"/>
    <property type="match status" value="1"/>
</dbReference>
<dbReference type="FunFam" id="1.10.10.60:FF:000058">
    <property type="entry name" value="zinc finger homeobox protein 4"/>
    <property type="match status" value="1"/>
</dbReference>
<dbReference type="FunFam" id="3.30.160.60:FF:000446">
    <property type="entry name" value="Zinc finger protein"/>
    <property type="match status" value="1"/>
</dbReference>
<dbReference type="Gene3D" id="3.30.160.60">
    <property type="entry name" value="Classic Zinc Finger"/>
    <property type="match status" value="3"/>
</dbReference>
<dbReference type="Gene3D" id="1.10.10.60">
    <property type="entry name" value="Homeodomain-like"/>
    <property type="match status" value="3"/>
</dbReference>
<dbReference type="InterPro" id="IPR001356">
    <property type="entry name" value="HD"/>
</dbReference>
<dbReference type="InterPro" id="IPR017970">
    <property type="entry name" value="Homeobox_CS"/>
</dbReference>
<dbReference type="InterPro" id="IPR009057">
    <property type="entry name" value="Homeodomain-like_sf"/>
</dbReference>
<dbReference type="InterPro" id="IPR003604">
    <property type="entry name" value="Matrin/U1-like-C_Znf_C2H2"/>
</dbReference>
<dbReference type="InterPro" id="IPR036236">
    <property type="entry name" value="Znf_C2H2_sf"/>
</dbReference>
<dbReference type="InterPro" id="IPR013087">
    <property type="entry name" value="Znf_C2H2_type"/>
</dbReference>
<dbReference type="InterPro" id="IPR051968">
    <property type="entry name" value="ZnFinger_Homeobox_TR"/>
</dbReference>
<dbReference type="PANTHER" id="PTHR45891">
    <property type="entry name" value="ZINC FINGER HOMEOBOX PROTEIN"/>
    <property type="match status" value="1"/>
</dbReference>
<dbReference type="PANTHER" id="PTHR45891:SF1">
    <property type="entry name" value="ZINC FINGER HOMEOBOX PROTEIN 2"/>
    <property type="match status" value="1"/>
</dbReference>
<dbReference type="Pfam" id="PF00046">
    <property type="entry name" value="Homeodomain"/>
    <property type="match status" value="3"/>
</dbReference>
<dbReference type="Pfam" id="PF24056">
    <property type="entry name" value="zf-C2H2_ZFHX3"/>
    <property type="match status" value="1"/>
</dbReference>
<dbReference type="SMART" id="SM00389">
    <property type="entry name" value="HOX"/>
    <property type="match status" value="3"/>
</dbReference>
<dbReference type="SMART" id="SM00355">
    <property type="entry name" value="ZnF_C2H2"/>
    <property type="match status" value="15"/>
</dbReference>
<dbReference type="SMART" id="SM00451">
    <property type="entry name" value="ZnF_U1"/>
    <property type="match status" value="7"/>
</dbReference>
<dbReference type="SUPFAM" id="SSF57667">
    <property type="entry name" value="beta-beta-alpha zinc fingers"/>
    <property type="match status" value="5"/>
</dbReference>
<dbReference type="SUPFAM" id="SSF46689">
    <property type="entry name" value="Homeodomain-like"/>
    <property type="match status" value="3"/>
</dbReference>
<dbReference type="PROSITE" id="PS00027">
    <property type="entry name" value="HOMEOBOX_1"/>
    <property type="match status" value="1"/>
</dbReference>
<dbReference type="PROSITE" id="PS50071">
    <property type="entry name" value="HOMEOBOX_2"/>
    <property type="match status" value="3"/>
</dbReference>
<dbReference type="PROSITE" id="PS00028">
    <property type="entry name" value="ZINC_FINGER_C2H2_1"/>
    <property type="match status" value="9"/>
</dbReference>
<dbReference type="PROSITE" id="PS50157">
    <property type="entry name" value="ZINC_FINGER_C2H2_2"/>
    <property type="match status" value="5"/>
</dbReference>
<feature type="chain" id="PRO_0000047243" description="Zinc finger homeobox protein 2">
    <location>
        <begin position="1"/>
        <end position="2572"/>
    </location>
</feature>
<feature type="zinc finger region" description="C2H2-type 1" evidence="1">
    <location>
        <begin position="453"/>
        <end position="476"/>
    </location>
</feature>
<feature type="zinc finger region" description="C2H2-type 2" evidence="1">
    <location>
        <begin position="508"/>
        <end position="532"/>
    </location>
</feature>
<feature type="zinc finger region" description="C2H2-type 3" evidence="1">
    <location>
        <begin position="821"/>
        <end position="845"/>
    </location>
</feature>
<feature type="zinc finger region" description="C2H2-type 4" evidence="1">
    <location>
        <begin position="870"/>
        <end position="894"/>
    </location>
</feature>
<feature type="zinc finger region" description="C2H2-type 5" evidence="1">
    <location>
        <begin position="1009"/>
        <end position="1032"/>
    </location>
</feature>
<feature type="zinc finger region" description="C2H2-type 6" evidence="1">
    <location>
        <begin position="1191"/>
        <end position="1217"/>
    </location>
</feature>
<feature type="zinc finger region" description="C2H2-type 7" evidence="1">
    <location>
        <begin position="1248"/>
        <end position="1272"/>
    </location>
</feature>
<feature type="zinc finger region" description="C2H2-type 8" evidence="1">
    <location>
        <begin position="1480"/>
        <end position="1503"/>
    </location>
</feature>
<feature type="DNA-binding region" description="Homeobox 1" evidence="2">
    <location>
        <begin position="1595"/>
        <end position="1654"/>
    </location>
</feature>
<feature type="zinc finger region" description="C2H2-type 9; degenerate" evidence="1">
    <location>
        <begin position="1670"/>
        <end position="1696"/>
    </location>
</feature>
<feature type="zinc finger region" description="C2H2-type 10" evidence="1">
    <location>
        <begin position="1769"/>
        <end position="1791"/>
    </location>
</feature>
<feature type="DNA-binding region" description="Homeobox 2" evidence="2">
    <location>
        <begin position="1857"/>
        <end position="1916"/>
    </location>
</feature>
<feature type="DNA-binding region" description="Homeobox 3" evidence="2">
    <location>
        <begin position="2065"/>
        <end position="2124"/>
    </location>
</feature>
<feature type="zinc finger region" description="C2H2-type 11; degenerate" evidence="1">
    <location>
        <begin position="2451"/>
        <end position="2471"/>
    </location>
</feature>
<feature type="zinc finger region" description="C2H2-type 12" evidence="1">
    <location>
        <begin position="2495"/>
        <end position="2519"/>
    </location>
</feature>
<feature type="region of interest" description="Disordered" evidence="3">
    <location>
        <begin position="1"/>
        <end position="107"/>
    </location>
</feature>
<feature type="region of interest" description="Disordered" evidence="3">
    <location>
        <begin position="343"/>
        <end position="425"/>
    </location>
</feature>
<feature type="region of interest" description="Disordered" evidence="3">
    <location>
        <begin position="537"/>
        <end position="566"/>
    </location>
</feature>
<feature type="region of interest" description="Disordered" evidence="3">
    <location>
        <begin position="608"/>
        <end position="655"/>
    </location>
</feature>
<feature type="region of interest" description="Disordered" evidence="3">
    <location>
        <begin position="675"/>
        <end position="710"/>
    </location>
</feature>
<feature type="region of interest" description="Disordered" evidence="3">
    <location>
        <begin position="929"/>
        <end position="974"/>
    </location>
</feature>
<feature type="region of interest" description="Disordered" evidence="3">
    <location>
        <begin position="1061"/>
        <end position="1171"/>
    </location>
</feature>
<feature type="region of interest" description="Disordered" evidence="3">
    <location>
        <begin position="1269"/>
        <end position="1325"/>
    </location>
</feature>
<feature type="region of interest" description="Disordered" evidence="3">
    <location>
        <begin position="1389"/>
        <end position="1408"/>
    </location>
</feature>
<feature type="region of interest" description="Disordered" evidence="3">
    <location>
        <begin position="1415"/>
        <end position="1434"/>
    </location>
</feature>
<feature type="region of interest" description="Disordered" evidence="3">
    <location>
        <begin position="1528"/>
        <end position="1591"/>
    </location>
</feature>
<feature type="region of interest" description="Disordered" evidence="3">
    <location>
        <begin position="1696"/>
        <end position="1769"/>
    </location>
</feature>
<feature type="region of interest" description="Disordered" evidence="3">
    <location>
        <begin position="1820"/>
        <end position="1860"/>
    </location>
</feature>
<feature type="region of interest" description="Disordered" evidence="3">
    <location>
        <begin position="1912"/>
        <end position="2065"/>
    </location>
</feature>
<feature type="region of interest" description="Disordered" evidence="3">
    <location>
        <begin position="2268"/>
        <end position="2327"/>
    </location>
</feature>
<feature type="region of interest" description="Disordered" evidence="3">
    <location>
        <begin position="2398"/>
        <end position="2431"/>
    </location>
</feature>
<feature type="region of interest" description="Disordered" evidence="3">
    <location>
        <begin position="2551"/>
        <end position="2572"/>
    </location>
</feature>
<feature type="compositionally biased region" description="Low complexity" evidence="3">
    <location>
        <begin position="8"/>
        <end position="36"/>
    </location>
</feature>
<feature type="compositionally biased region" description="Polar residues" evidence="3">
    <location>
        <begin position="44"/>
        <end position="53"/>
    </location>
</feature>
<feature type="compositionally biased region" description="Polar residues" evidence="3">
    <location>
        <begin position="389"/>
        <end position="398"/>
    </location>
</feature>
<feature type="compositionally biased region" description="Pro residues" evidence="3">
    <location>
        <begin position="615"/>
        <end position="628"/>
    </location>
</feature>
<feature type="compositionally biased region" description="Low complexity" evidence="3">
    <location>
        <begin position="696"/>
        <end position="705"/>
    </location>
</feature>
<feature type="compositionally biased region" description="Polar residues" evidence="3">
    <location>
        <begin position="954"/>
        <end position="974"/>
    </location>
</feature>
<feature type="compositionally biased region" description="Pro residues" evidence="3">
    <location>
        <begin position="1120"/>
        <end position="1132"/>
    </location>
</feature>
<feature type="compositionally biased region" description="Basic and acidic residues" evidence="3">
    <location>
        <begin position="1279"/>
        <end position="1311"/>
    </location>
</feature>
<feature type="compositionally biased region" description="Pro residues" evidence="3">
    <location>
        <begin position="1392"/>
        <end position="1401"/>
    </location>
</feature>
<feature type="compositionally biased region" description="Acidic residues" evidence="3">
    <location>
        <begin position="1696"/>
        <end position="1724"/>
    </location>
</feature>
<feature type="compositionally biased region" description="Pro residues" evidence="3">
    <location>
        <begin position="1728"/>
        <end position="1738"/>
    </location>
</feature>
<feature type="compositionally biased region" description="Low complexity" evidence="3">
    <location>
        <begin position="1925"/>
        <end position="1939"/>
    </location>
</feature>
<feature type="compositionally biased region" description="Basic and acidic residues" evidence="3">
    <location>
        <begin position="1949"/>
        <end position="1963"/>
    </location>
</feature>
<feature type="compositionally biased region" description="Pro residues" evidence="3">
    <location>
        <begin position="1991"/>
        <end position="2004"/>
    </location>
</feature>
<feature type="compositionally biased region" description="Low complexity" evidence="3">
    <location>
        <begin position="2017"/>
        <end position="2044"/>
    </location>
</feature>
<feature type="compositionally biased region" description="Gly residues" evidence="3">
    <location>
        <begin position="2045"/>
        <end position="2061"/>
    </location>
</feature>
<feature type="compositionally biased region" description="Polar residues" evidence="3">
    <location>
        <begin position="2284"/>
        <end position="2293"/>
    </location>
</feature>
<feature type="compositionally biased region" description="Basic and acidic residues" evidence="3">
    <location>
        <begin position="2305"/>
        <end position="2315"/>
    </location>
</feature>
<feature type="compositionally biased region" description="Pro residues" evidence="3">
    <location>
        <begin position="2402"/>
        <end position="2422"/>
    </location>
</feature>
<feature type="compositionally biased region" description="Low complexity" evidence="3">
    <location>
        <begin position="2563"/>
        <end position="2572"/>
    </location>
</feature>
<feature type="splice variant" id="VSP_039496" description="In isoform 2." evidence="5">
    <original>FLLDMEGAE</original>
    <variation>RTETGLLIK</variation>
    <location>
        <begin position="854"/>
        <end position="862"/>
    </location>
</feature>
<feature type="splice variant" id="VSP_039497" description="In isoform 2." evidence="5">
    <location>
        <begin position="863"/>
        <end position="2572"/>
    </location>
</feature>
<feature type="sequence variant" id="VAR_081116" description="In MARSIS; dbSNP:rs1555344723." evidence="4">
    <original>R</original>
    <variation>K</variation>
    <location>
        <position position="1913"/>
    </location>
</feature>
<feature type="sequence conflict" description="In Ref. 1; BAA83008." evidence="6" ref="1">
    <original>R</original>
    <variation>Q</variation>
    <location>
        <position position="473"/>
    </location>
</feature>
<feature type="sequence conflict" description="In Ref. 1; BAA83008." evidence="6" ref="1">
    <original>P</original>
    <variation>T</variation>
    <location>
        <position position="550"/>
    </location>
</feature>